<reference key="1">
    <citation type="journal article" date="1998" name="Science">
        <title>Chromosome 2 sequence of the human malaria parasite Plasmodium falciparum.</title>
        <authorList>
            <person name="Gardner M.J."/>
            <person name="Tettelin H."/>
            <person name="Carucci D.J."/>
            <person name="Cummings L.M."/>
            <person name="Aravind L."/>
            <person name="Koonin E.V."/>
            <person name="Shallom S.J."/>
            <person name="Mason T."/>
            <person name="Yu K."/>
            <person name="Fujii C."/>
            <person name="Pederson J."/>
            <person name="Shen K."/>
            <person name="Jing J."/>
            <person name="Aston C."/>
            <person name="Lai Z."/>
            <person name="Schwartz D.C."/>
            <person name="Pertea M."/>
            <person name="Salzberg S.L."/>
            <person name="Zhou L."/>
            <person name="Sutton G.G."/>
            <person name="Clayton R."/>
            <person name="White O."/>
            <person name="Smith H.O."/>
            <person name="Fraser C.M."/>
            <person name="Adams M.D."/>
            <person name="Venter J.C."/>
            <person name="Hoffman S.L."/>
        </authorList>
    </citation>
    <scope>NUCLEOTIDE SEQUENCE [LARGE SCALE GENOMIC DNA]</scope>
    <source>
        <strain>3D7</strain>
    </source>
</reference>
<reference key="2">
    <citation type="journal article" date="2002" name="Nature">
        <title>Genome sequence of the human malaria parasite Plasmodium falciparum.</title>
        <authorList>
            <person name="Gardner M.J."/>
            <person name="Hall N."/>
            <person name="Fung E."/>
            <person name="White O."/>
            <person name="Berriman M."/>
            <person name="Hyman R.W."/>
            <person name="Carlton J.M."/>
            <person name="Pain A."/>
            <person name="Nelson K.E."/>
            <person name="Bowman S."/>
            <person name="Paulsen I.T."/>
            <person name="James K.D."/>
            <person name="Eisen J.A."/>
            <person name="Rutherford K.M."/>
            <person name="Salzberg S.L."/>
            <person name="Craig A."/>
            <person name="Kyes S."/>
            <person name="Chan M.-S."/>
            <person name="Nene V."/>
            <person name="Shallom S.J."/>
            <person name="Suh B."/>
            <person name="Peterson J."/>
            <person name="Angiuoli S."/>
            <person name="Pertea M."/>
            <person name="Allen J."/>
            <person name="Selengut J."/>
            <person name="Haft D."/>
            <person name="Mather M.W."/>
            <person name="Vaidya A.B."/>
            <person name="Martin D.M.A."/>
            <person name="Fairlamb A.H."/>
            <person name="Fraunholz M.J."/>
            <person name="Roos D.S."/>
            <person name="Ralph S.A."/>
            <person name="McFadden G.I."/>
            <person name="Cummings L.M."/>
            <person name="Subramanian G.M."/>
            <person name="Mungall C."/>
            <person name="Venter J.C."/>
            <person name="Carucci D.J."/>
            <person name="Hoffman S.L."/>
            <person name="Newbold C."/>
            <person name="Davis R.W."/>
            <person name="Fraser C.M."/>
            <person name="Barrell B.G."/>
        </authorList>
    </citation>
    <scope>NUCLEOTIDE SEQUENCE [LARGE SCALE GENOMIC DNA]</scope>
    <source>
        <strain>3D7</strain>
    </source>
</reference>
<reference key="3">
    <citation type="journal article" date="2002" name="Mol. Biochem. Parasitol.">
        <title>Male-specific expression of the paralog of malaria transmission-blocking target antigen Pfs230, PfB0400w.</title>
        <authorList>
            <person name="Eksi S."/>
            <person name="Williamson K.C."/>
        </authorList>
    </citation>
    <scope>SUBCELLULAR LOCATION</scope>
    <scope>DEVELOPMENTAL STAGE</scope>
</reference>
<reference key="4">
    <citation type="journal article" date="2018" name="Sci. Rep.">
        <title>The Plasmodium falciparum male gametocyte protein P230p, a paralog of P230, is vital for ookinete formation and mosquito transmission.</title>
        <authorList>
            <person name="Marin-Mogollon C."/>
            <person name="van de Vegte-Bolmer M."/>
            <person name="van Gemert G.J."/>
            <person name="van Pul F.J.A."/>
            <person name="Ramesar J."/>
            <person name="Othman A.S."/>
            <person name="Kroeze H."/>
            <person name="Miao J."/>
            <person name="Cui L."/>
            <person name="Williamson K.C."/>
            <person name="Sauerwein R.W."/>
            <person name="Janse C.J."/>
            <person name="Khan S.M."/>
        </authorList>
    </citation>
    <scope>SUBCELLULAR LOCATION</scope>
    <scope>DEVELOPMENTAL STAGE</scope>
</reference>
<organism>
    <name type="scientific">Plasmodium falciparum (isolate 3D7)</name>
    <dbReference type="NCBI Taxonomy" id="36329"/>
    <lineage>
        <taxon>Eukaryota</taxon>
        <taxon>Sar</taxon>
        <taxon>Alveolata</taxon>
        <taxon>Apicomplexa</taxon>
        <taxon>Aconoidasida</taxon>
        <taxon>Haemosporida</taxon>
        <taxon>Plasmodiidae</taxon>
        <taxon>Plasmodium</taxon>
        <taxon>Plasmodium (Laverania)</taxon>
    </lineage>
</organism>
<evidence type="ECO:0000250" key="1">
    <source>
        <dbReference type="UniProtKB" id="W7K265"/>
    </source>
</evidence>
<evidence type="ECO:0000255" key="2"/>
<evidence type="ECO:0000255" key="3">
    <source>
        <dbReference type="PROSITE-ProRule" id="PRU01038"/>
    </source>
</evidence>
<evidence type="ECO:0000256" key="4">
    <source>
        <dbReference type="SAM" id="MobiDB-lite"/>
    </source>
</evidence>
<evidence type="ECO:0000269" key="5">
    <source>
    </source>
</evidence>
<evidence type="ECO:0000269" key="6">
    <source>
    </source>
</evidence>
<evidence type="ECO:0000305" key="7"/>
<name>P230P_PLAF7</name>
<feature type="signal peptide" evidence="2">
    <location>
        <begin position="1"/>
        <end position="34"/>
    </location>
</feature>
<feature type="chain" id="PRO_0000423564" description="Male gametocyte surface protein P230p">
    <location>
        <begin position="35"/>
        <end position="2508"/>
    </location>
</feature>
<feature type="domain" description="6-Cys 1" evidence="3">
    <location>
        <begin position="394"/>
        <end position="516"/>
    </location>
</feature>
<feature type="domain" description="6-Cys 2" evidence="3">
    <location>
        <begin position="676"/>
        <end position="800"/>
    </location>
</feature>
<feature type="domain" description="6-Cys 3" evidence="3">
    <location>
        <begin position="831"/>
        <end position="1096"/>
    </location>
</feature>
<feature type="domain" description="6-Cys 4" evidence="3">
    <location>
        <begin position="1099"/>
        <end position="1231"/>
    </location>
</feature>
<feature type="domain" description="6-Cys 5" evidence="3">
    <location>
        <begin position="1268"/>
        <end position="1428"/>
    </location>
</feature>
<feature type="domain" description="6-Cys 6" evidence="3">
    <location>
        <begin position="1433"/>
        <end position="1565"/>
    </location>
</feature>
<feature type="domain" description="6-Cys 7" evidence="3">
    <location>
        <begin position="1656"/>
        <end position="1804"/>
    </location>
</feature>
<feature type="domain" description="6-Cys 8" evidence="3">
    <location>
        <begin position="1807"/>
        <end position="1984"/>
    </location>
</feature>
<feature type="domain" description="6-Cys 9" evidence="3">
    <location>
        <begin position="2197"/>
        <end position="2354"/>
    </location>
</feature>
<feature type="domain" description="6-Cys 10" evidence="3">
    <location>
        <begin position="2357"/>
        <end position="2481"/>
    </location>
</feature>
<feature type="region of interest" description="Disordered" evidence="4">
    <location>
        <begin position="2081"/>
        <end position="2113"/>
    </location>
</feature>
<feature type="compositionally biased region" description="Acidic residues" evidence="4">
    <location>
        <begin position="2082"/>
        <end position="2112"/>
    </location>
</feature>
<feature type="glycosylation site" description="N-linked (GlcNAc...) asparagine" evidence="2">
    <location>
        <position position="230"/>
    </location>
</feature>
<feature type="glycosylation site" description="N-linked (GlcNAc...) asparagine" evidence="2">
    <location>
        <position position="254"/>
    </location>
</feature>
<feature type="glycosylation site" description="N-linked (GlcNAc...) asparagine" evidence="2">
    <location>
        <position position="362"/>
    </location>
</feature>
<feature type="glycosylation site" description="N-linked (GlcNAc...) asparagine" evidence="2">
    <location>
        <position position="414"/>
    </location>
</feature>
<feature type="glycosylation site" description="N-linked (GlcNAc...) asparagine" evidence="2">
    <location>
        <position position="601"/>
    </location>
</feature>
<feature type="glycosylation site" description="N-linked (GlcNAc...) asparagine" evidence="2">
    <location>
        <position position="674"/>
    </location>
</feature>
<feature type="glycosylation site" description="N-linked (GlcNAc...) asparagine" evidence="2">
    <location>
        <position position="703"/>
    </location>
</feature>
<feature type="glycosylation site" description="N-linked (GlcNAc...) asparagine" evidence="2">
    <location>
        <position position="779"/>
    </location>
</feature>
<feature type="glycosylation site" description="N-linked (GlcNAc...) asparagine" evidence="2">
    <location>
        <position position="849"/>
    </location>
</feature>
<feature type="glycosylation site" description="N-linked (GlcNAc...) asparagine" evidence="2">
    <location>
        <position position="986"/>
    </location>
</feature>
<feature type="glycosylation site" description="N-linked (GlcNAc...) asparagine" evidence="2">
    <location>
        <position position="995"/>
    </location>
</feature>
<feature type="glycosylation site" description="N-linked (GlcNAc...) asparagine" evidence="2">
    <location>
        <position position="1065"/>
    </location>
</feature>
<feature type="glycosylation site" description="N-linked (GlcNAc...) asparagine" evidence="2">
    <location>
        <position position="1074"/>
    </location>
</feature>
<feature type="glycosylation site" description="N-linked (GlcNAc...) asparagine" evidence="2">
    <location>
        <position position="1231"/>
    </location>
</feature>
<feature type="glycosylation site" description="N-linked (GlcNAc...) asparagine" evidence="2">
    <location>
        <position position="1385"/>
    </location>
</feature>
<feature type="glycosylation site" description="N-linked (GlcNAc...) asparagine" evidence="2">
    <location>
        <position position="1525"/>
    </location>
</feature>
<feature type="glycosylation site" description="N-linked (GlcNAc...) asparagine" evidence="2">
    <location>
        <position position="1550"/>
    </location>
</feature>
<feature type="glycosylation site" description="N-linked (GlcNAc...) asparagine" evidence="2">
    <location>
        <position position="1567"/>
    </location>
</feature>
<feature type="glycosylation site" description="N-linked (GlcNAc...) asparagine" evidence="2">
    <location>
        <position position="1750"/>
    </location>
</feature>
<feature type="glycosylation site" description="N-linked (GlcNAc...) asparagine" evidence="2">
    <location>
        <position position="1755"/>
    </location>
</feature>
<feature type="glycosylation site" description="N-linked (GlcNAc...) asparagine" evidence="2">
    <location>
        <position position="1788"/>
    </location>
</feature>
<feature type="glycosylation site" description="N-linked (GlcNAc...) asparagine" evidence="2">
    <location>
        <position position="2016"/>
    </location>
</feature>
<feature type="glycosylation site" description="N-linked (GlcNAc...) asparagine" evidence="2">
    <location>
        <position position="2047"/>
    </location>
</feature>
<feature type="glycosylation site" description="N-linked (GlcNAc...) asparagine" evidence="2">
    <location>
        <position position="2143"/>
    </location>
</feature>
<feature type="glycosylation site" description="N-linked (GlcNAc...) asparagine" evidence="2">
    <location>
        <position position="2211"/>
    </location>
</feature>
<feature type="glycosylation site" description="N-linked (GlcNAc...) asparagine" evidence="2">
    <location>
        <position position="2239"/>
    </location>
</feature>
<feature type="glycosylation site" description="N-linked (GlcNAc...) asparagine" evidence="2">
    <location>
        <position position="2255"/>
    </location>
</feature>
<feature type="disulfide bond" evidence="3">
    <location>
        <begin position="443"/>
        <end position="493"/>
    </location>
</feature>
<feature type="disulfide bond" evidence="3">
    <location>
        <begin position="680"/>
        <end position="700"/>
    </location>
</feature>
<feature type="disulfide bond" evidence="3">
    <location>
        <begin position="714"/>
        <end position="775"/>
    </location>
</feature>
<feature type="disulfide bond" evidence="3">
    <location>
        <begin position="725"/>
        <end position="773"/>
    </location>
</feature>
<feature type="disulfide bond" evidence="3">
    <location>
        <begin position="835"/>
        <end position="856"/>
    </location>
</feature>
<feature type="disulfide bond" evidence="3">
    <location>
        <begin position="871"/>
        <end position="1072"/>
    </location>
</feature>
<feature type="disulfide bond" evidence="3">
    <location>
        <begin position="1103"/>
        <end position="1129"/>
    </location>
</feature>
<feature type="disulfide bond" evidence="3">
    <location>
        <begin position="1144"/>
        <end position="1206"/>
    </location>
</feature>
<feature type="disulfide bond" evidence="3">
    <location>
        <begin position="1157"/>
        <end position="1204"/>
    </location>
</feature>
<feature type="disulfide bond" evidence="3">
    <location>
        <begin position="1272"/>
        <end position="1293"/>
    </location>
</feature>
<feature type="disulfide bond" evidence="3">
    <location>
        <begin position="1308"/>
        <end position="1404"/>
    </location>
</feature>
<feature type="disulfide bond" evidence="3">
    <location>
        <begin position="1437"/>
        <end position="1464"/>
    </location>
</feature>
<feature type="disulfide bond" evidence="3">
    <location>
        <begin position="1478"/>
        <end position="1547"/>
    </location>
</feature>
<feature type="disulfide bond" evidence="3">
    <location>
        <begin position="1488"/>
        <end position="1545"/>
    </location>
</feature>
<feature type="disulfide bond" evidence="3">
    <location>
        <begin position="1704"/>
        <end position="1782"/>
    </location>
</feature>
<feature type="disulfide bond" evidence="3">
    <location>
        <begin position="1811"/>
        <end position="1883"/>
    </location>
</feature>
<feature type="disulfide bond" evidence="3">
    <location>
        <begin position="1897"/>
        <end position="1966"/>
    </location>
</feature>
<feature type="disulfide bond" evidence="3">
    <location>
        <begin position="1908"/>
        <end position="1964"/>
    </location>
</feature>
<feature type="disulfide bond" evidence="3">
    <location>
        <begin position="2361"/>
        <end position="2386"/>
    </location>
</feature>
<feature type="disulfide bond" evidence="3">
    <location>
        <begin position="2400"/>
        <end position="2461"/>
    </location>
</feature>
<feature type="disulfide bond" evidence="3">
    <location>
        <begin position="2411"/>
        <end position="2459"/>
    </location>
</feature>
<dbReference type="EMBL" id="LN999943">
    <property type="protein sequence ID" value="CZT98103.1"/>
    <property type="molecule type" value="Genomic_DNA"/>
</dbReference>
<dbReference type="PIR" id="A71616">
    <property type="entry name" value="A71616"/>
</dbReference>
<dbReference type="RefSeq" id="XP_001349599.1">
    <property type="nucleotide sequence ID" value="XM_001349563.1"/>
</dbReference>
<dbReference type="SMR" id="O96175"/>
<dbReference type="FunCoup" id="O96175">
    <property type="interactions" value="492"/>
</dbReference>
<dbReference type="GlyCosmos" id="O96175">
    <property type="glycosylation" value="27 sites, No reported glycans"/>
</dbReference>
<dbReference type="PaxDb" id="5833-PFB0400w"/>
<dbReference type="EnsemblProtists" id="CZT98103">
    <property type="protein sequence ID" value="CZT98103"/>
    <property type="gene ID" value="PF3D7_0208900"/>
</dbReference>
<dbReference type="GeneID" id="812681"/>
<dbReference type="KEGG" id="pfa:PF3D7_0208900"/>
<dbReference type="VEuPathDB" id="PlasmoDB:PF3D7_0208900"/>
<dbReference type="HOGENOM" id="CLU_230593_0_0_1"/>
<dbReference type="InParanoid" id="O96175"/>
<dbReference type="OMA" id="FYCTCED"/>
<dbReference type="OrthoDB" id="381130at2759"/>
<dbReference type="PhylomeDB" id="O96175"/>
<dbReference type="Proteomes" id="UP000001450">
    <property type="component" value="Chromosome 2"/>
</dbReference>
<dbReference type="GO" id="GO:0009986">
    <property type="term" value="C:cell surface"/>
    <property type="evidence" value="ECO:0000314"/>
    <property type="project" value="GeneDB"/>
</dbReference>
<dbReference type="GO" id="GO:0005886">
    <property type="term" value="C:plasma membrane"/>
    <property type="evidence" value="ECO:0007669"/>
    <property type="project" value="UniProtKB-SubCell"/>
</dbReference>
<dbReference type="FunFam" id="2.60.40.2860:FF:000010">
    <property type="entry name" value="Transmission-blocking target antigen S230"/>
    <property type="match status" value="1"/>
</dbReference>
<dbReference type="FunFam" id="2.60.40.2860:FF:000011">
    <property type="entry name" value="Transmission-blocking target antigen S230"/>
    <property type="match status" value="1"/>
</dbReference>
<dbReference type="FunFam" id="2.60.40.2860:FF:000012">
    <property type="entry name" value="Transmission-blocking target antigen S230"/>
    <property type="match status" value="1"/>
</dbReference>
<dbReference type="FunFam" id="2.60.40.2860:FF:000013">
    <property type="entry name" value="Transmission-blocking target antigen S230"/>
    <property type="match status" value="1"/>
</dbReference>
<dbReference type="FunFam" id="2.60.40.2860:FF:000014">
    <property type="entry name" value="Transmission-blocking target antigen S230"/>
    <property type="match status" value="1"/>
</dbReference>
<dbReference type="Gene3D" id="2.60.40.2860">
    <property type="match status" value="6"/>
</dbReference>
<dbReference type="InterPro" id="IPR010884">
    <property type="entry name" value="6_CYS_dom"/>
</dbReference>
<dbReference type="InterPro" id="IPR038160">
    <property type="entry name" value="6_CYS_dom_sf"/>
</dbReference>
<dbReference type="InterPro" id="IPR051444">
    <property type="entry name" value="Parasite_Repro/Invasion_Surf"/>
</dbReference>
<dbReference type="PANTHER" id="PTHR38796">
    <property type="match status" value="1"/>
</dbReference>
<dbReference type="PANTHER" id="PTHR38796:SF1">
    <property type="entry name" value="ANCHORED PROTEIN, PUTATIVE (AFU_ORTHOLOGUE AFUA_4G09600)-RELATED"/>
    <property type="match status" value="1"/>
</dbReference>
<dbReference type="Pfam" id="PF07422">
    <property type="entry name" value="s48_45"/>
    <property type="match status" value="6"/>
</dbReference>
<dbReference type="SMART" id="SM00970">
    <property type="entry name" value="s48_45"/>
    <property type="match status" value="6"/>
</dbReference>
<dbReference type="PROSITE" id="PS51701">
    <property type="entry name" value="6_CYS"/>
    <property type="match status" value="10"/>
</dbReference>
<accession>O96175</accession>
<accession>A0A144A0J8</accession>
<gene>
    <name type="primary">PFS230P</name>
    <name type="synonym">PF230P</name>
    <name type="synonym">PfsMR5</name>
    <name type="synonym">S230P</name>
    <name type="ORF">PF3D7_0208900</name>
    <name type="ORF">PFB0400w</name>
</gene>
<sequence length="2508" mass="293647">MFIYLFIYLFFKMDKKRTFYYLFFFFTFLVYVLYFDNIKSVLRSSTKKKKKKKICKSTFYVHEESEEIKSWLRNSNERDKGKKFFIFERLIKERKYICVNKYKRNNKLKWIYKNTYEKTKNICDDYNILFKCIKGIIYDKNKETFFETFFENFWDNIFYMNKYIFNIYYYMFDYTKKVKKKIEGIKENMNIRHNNNYNNIFYVHKFFLFNDDEEKKKRNDDIKINIKLHNNTRKLSVSEENVELKPYIKQGERNETVVNLYEYFTGGVKRSNNNNEIVVTSTEQFHRIVIICFKPTVKHSHIITSPHDALNHIVEENDKIKLSEEIYSIPFYPIYGNLGLKNVITTGIVEFMIPYFSRTQMNFTVTCANGEMNDLYKFEDLIKIRIRIPRNTKKILGLSTNEKDKTVFERIVDNTSNEYRFKSYNNKIVGIKLENSILDPPGCFKTVYEDDKILQLEVFLQYVKCINLDRDNYKIRFFFLPEDFGDEEIEFSCKFTYKKKTSKIIFGLGETSVDKDIFYLEDEHVKLNINQDISGDEPYYSHLNYNGIPYNICNFQYKSEYDSQVCERTIHEFSLFIYNCDTLVGTQIQTTEPITSVKYLNSTYPINKFSDITLLSKDIDIEGLEEAFRNSKFFLTSYINHGPFPLIIECVISNSNKDYQNVYILLHLRTSIKNRSVSFCDFEKVQGYNYLNNYIDGKICNINITSNSVFGFRCPSNSIKEPKDCFSQVYIDKKVYKLNDKLSNKLILYSMKQENLAIAGFNNYISNSFSFECYCIDKNQTYSSYERTSGEDIFNHIVKRIHVHYKNYDELYDYNIHDKITYEPIMKNPPITYLCDFLNKKQILQPLNNKTKNYICTIWYPKPLNYIALNCPTNRRDEQNDQTISEVYNSLQKDLLKPTGIEQQIDQKKKELNLLFNKRNIYSNLYHLPKNAPKRTINKNGLNIVNIDEIIPGILIKDVINMKLEDVIKPDLLTPTSFLHKTYNTNKSYLFSTRNKSTSVFNTPSIYTPLTHTSFSISPKSVPLTKSRIEETHSSSNTYEQYIGKRNSIENGFFIFQLPPYLKKNQTIEFACINDSTIKNKNVGNNGIMTIHLKSFGNPIEGCYFYKNSAKYNYLKKSIKIDDLKKEECTIRSDGEIEFVGIMCPYENNLYLTPSSCFLKTYDNTDNLVELLDINENFEYYSNDKGISYLKIPQEFLNHVHLFCYCNVDKDSVSDTNVLVKKENKISLELNYSNKGFNIIKTIDYQYEADILIGYSYYFKRVTPIYRKKHICDFTTEDNSLEPESEDKMIYSCYLSLENNLNFIEVKCPKNKKSSNSEWLFKYGTFDKSSEIMEDDENIKKYEHMKYMPEDKDEIIYLFKKQKLEDILPGVIIFDKNRYFFEKGNFSFVTPLIVKEDVTIKLLCDNSETKIDDKIGKKGIILIKIPQHITDKKFYGCDFSGDSNKKSSFYYTSVYDLKTQNQYCEVKLKENIIISLNCPNGNINPNNCFNNVFLKTNMNEQIHEKIQNIFDQVKVINTKSHVLLNSSSTFLIISKITKKELNFFCTCHHNETKNVGTIYIKNEDIINFSKAYNKESSILQYIDVTPYYLKDTYICDFTQNHYSISFDTSVNVQNVLERYLKILSDLYNTHEEFTYFSIHLKLKKEIMKKKYIDYLKKKINEYKEKETSDKIKRVTLSTNDNINTILVYRCNIDLGSFDKFKIKCPSKLNEEEVENNKLYPNLIYSSNLGLDETDMLNGLTKLLYGSVLINKTEKNVSFFEKGELELIISPYTDSSKNIIFSCENVPRNLSKGIIGSASIFIKKNDNKILGCDFIDTPSTLSSASTLESSYGSHASSPLSSSHHVLHNDNQGHDVHMINHIDISNKKNSFEFEIELIEGKNTYCNIEAIENDIVGFSCPYNFLTTPSDCFESIQIEGVDKELETHKLEKLLKGVKILNNDIYKYNFTPSYIILPKKIKKSLKIFCRCNSVKLIKTGIIQINIVGDDLNNWFKKEITHNIFAYQKMDYFYDFSKGPTNISSENVLGISTMSLMSSNKKVSRKKNHKEENRTQQNVYKEIENDHKNINENVNKYDNLPVTLLSSDEGDGYQADEDIGGEDDAEDVDGEGDDEDDNILNPLRTKQVYDIIVAASEFSKIEVVCPLRNSSQFRQSKISPENFFEYVYVLEDKNDDKRKRSIEENEKLVKAILEGKKNIDGHIINIEDINNKKSSKNASVEYDDMGNKIFISIISEKPKAVIGDNISSSRSSVHISNNIMNSSFQSNIHPDPITSDTTTSEYEQYNSYFKDILVIKNINEVISFANIKIDINEQTYSSSLHIPPLILKDAEFLISCDNSLTLNENTRGKTATVKIKVKSNFLKIYGCDFVGEFSTHFLFSKKWDDIPKNYICKINIQDDMLIGLACPSFTKLHPPDCFENIIVNQNVYKKNIIMETKNMFFYKQNDKPILSFVHVKKILVETFLCKCYQVTKADYKEVTIQILYEPYVMGTPKYTLEKSIIQYRYANLKPPLHI</sequence>
<comment type="function">
    <text evidence="1">Plays an essential role in male gamete fertility (By similarity). Required for the binding to erythrocytes and thus, for the formation of exflagellation centers (By similarity).</text>
</comment>
<comment type="subcellular location">
    <subcellularLocation>
        <location evidence="5">Cell surface</location>
    </subcellularLocation>
    <subcellularLocation>
        <location evidence="5 6">Cell membrane</location>
        <topology evidence="7">Peripheral membrane protein</topology>
    </subcellularLocation>
    <text evidence="5 6">Present on the surface of male gametocytes.</text>
</comment>
<comment type="developmental stage">
    <text evidence="5 6">Specifically presents on the surface of stage V male gametocytes (at protein level) (PubMed:12106866, PubMed:30297725). Not expressed in gametes or asexual parasites (PubMed:12106866). Expression peaks in stage III/IV gametocytes, then sharply declines in gametes (PubMed:12106866).</text>
</comment>
<comment type="miscellaneous">
    <text evidence="6">In P.berghei, dispensable for male gamete attachment to erythrocytes and the formation of exflagellation centers.</text>
</comment>
<keyword id="KW-1003">Cell membrane</keyword>
<keyword id="KW-1015">Disulfide bond</keyword>
<keyword id="KW-0325">Glycoprotein</keyword>
<keyword id="KW-0461">Malaria</keyword>
<keyword id="KW-0472">Membrane</keyword>
<keyword id="KW-1185">Reference proteome</keyword>
<keyword id="KW-0677">Repeat</keyword>
<keyword id="KW-0732">Signal</keyword>
<proteinExistence type="evidence at protein level"/>
<protein>
    <recommendedName>
        <fullName>Male gametocyte surface protein P230p</fullName>
    </recommendedName>
</protein>